<gene>
    <name type="primary">MESD</name>
    <name type="synonym">MESDC2</name>
</gene>
<name>MESD_BOVIN</name>
<comment type="function">
    <text evidence="1">Chaperone specifically assisting the folding of beta-propeller/EGF modules within the family of low-density lipoprotein receptors (LDLRs). Acts as a modulator of the Wnt pathway through chaperoning the coreceptors of the canonical Wnt pathway, LRP5 and LRP6, to the plasma membrane. Essential for specification of embryonic polarity and mesoderm induction. Plays an essential role in neuromuscular junction (NMJ) formation by promoting cell-surface expression of LRP4. May regulate phagocytosis of apoptotic retinal pigment epithelium (RPE) cells.</text>
</comment>
<comment type="subunit">
    <text evidence="1">Monomer. Interacts with LRP5; the interaction prevents LRP5 from forming aggregates and chaperones LRP6 to the plasma membrane. Interacts with LRP6; the interaction prevents LRP6 from forming aggregates and chaperones LRP6 to the plasma membrane. Interacts with LRP4; the interaction promotes glycosylation of LRP4 and its cell-surface expression.</text>
</comment>
<comment type="subcellular location">
    <subcellularLocation>
        <location evidence="3">Endoplasmic reticulum</location>
    </subcellularLocation>
    <text evidence="1">Released from apoptotic cells and shed photoreceptor outer segments (By similarity).</text>
</comment>
<comment type="domain">
    <text evidence="1">The chaperone domain provides a folding template for proper folding of the beta-propeller (BP) domains of LRP5/6.</text>
</comment>
<comment type="domain">
    <text evidence="1">The escort domain ensures LRP5/6 safe-trafficking from the ER to the Golgi by preventing premature ligand-binding.</text>
</comment>
<comment type="similarity">
    <text evidence="5">Belongs to the MESD family.</text>
</comment>
<keyword id="KW-0143">Chaperone</keyword>
<keyword id="KW-0256">Endoplasmic reticulum</keyword>
<keyword id="KW-0325">Glycoprotein</keyword>
<keyword id="KW-1185">Reference proteome</keyword>
<keyword id="KW-0732">Signal</keyword>
<keyword id="KW-0879">Wnt signaling pathway</keyword>
<sequence length="232" mass="25977">MAASGWARAAVIFLCACDLLLLLLLPPRAFATEGPAETPGEATPPPRKKKKDIRDYNDADMARLLEQWEKDDDIEEGDLPEHKRPSAPIDFSQIDPGKPESILKMTKKGKTLMMFVTVSGNPTEKETEEITSLWQGSLFNANYDVQRFIVGSDRAIFMLRDGGYAWEIKDFLVSQDRCADVTLEGQVYPGKGGGSKEKNQTKQEKGKKKKERDLKPRASKEDNRAGSKKEEL</sequence>
<accession>Q3T0U1</accession>
<organism>
    <name type="scientific">Bos taurus</name>
    <name type="common">Bovine</name>
    <dbReference type="NCBI Taxonomy" id="9913"/>
    <lineage>
        <taxon>Eukaryota</taxon>
        <taxon>Metazoa</taxon>
        <taxon>Chordata</taxon>
        <taxon>Craniata</taxon>
        <taxon>Vertebrata</taxon>
        <taxon>Euteleostomi</taxon>
        <taxon>Mammalia</taxon>
        <taxon>Eutheria</taxon>
        <taxon>Laurasiatheria</taxon>
        <taxon>Artiodactyla</taxon>
        <taxon>Ruminantia</taxon>
        <taxon>Pecora</taxon>
        <taxon>Bovidae</taxon>
        <taxon>Bovinae</taxon>
        <taxon>Bos</taxon>
    </lineage>
</organism>
<proteinExistence type="evidence at transcript level"/>
<reference key="1">
    <citation type="submission" date="2005-08" db="EMBL/GenBank/DDBJ databases">
        <authorList>
            <consortium name="NIH - Mammalian Gene Collection (MGC) project"/>
        </authorList>
    </citation>
    <scope>NUCLEOTIDE SEQUENCE [LARGE SCALE MRNA]</scope>
    <source>
        <strain>Crossbred X Angus</strain>
        <tissue>Ileum</tissue>
    </source>
</reference>
<dbReference type="EMBL" id="BC102262">
    <property type="protein sequence ID" value="AAI02263.1"/>
    <property type="molecule type" value="mRNA"/>
</dbReference>
<dbReference type="RefSeq" id="NP_001029641.1">
    <property type="nucleotide sequence ID" value="NM_001034469.1"/>
</dbReference>
<dbReference type="SMR" id="Q3T0U1"/>
<dbReference type="FunCoup" id="Q3T0U1">
    <property type="interactions" value="3308"/>
</dbReference>
<dbReference type="STRING" id="9913.ENSBTAP00000002045"/>
<dbReference type="GlyCosmos" id="Q3T0U1">
    <property type="glycosylation" value="1 site, No reported glycans"/>
</dbReference>
<dbReference type="GlyGen" id="Q3T0U1">
    <property type="glycosylation" value="1 site"/>
</dbReference>
<dbReference type="PaxDb" id="9913-ENSBTAP00000002045"/>
<dbReference type="PeptideAtlas" id="Q3T0U1"/>
<dbReference type="GeneID" id="514610"/>
<dbReference type="KEGG" id="bta:514610"/>
<dbReference type="CTD" id="23184"/>
<dbReference type="VEuPathDB" id="HostDB:ENSBTAG00000001565"/>
<dbReference type="eggNOG" id="KOG4357">
    <property type="taxonomic scope" value="Eukaryota"/>
</dbReference>
<dbReference type="HOGENOM" id="CLU_111621_0_0_1"/>
<dbReference type="InParanoid" id="Q3T0U1"/>
<dbReference type="OMA" id="QQRCADV"/>
<dbReference type="OrthoDB" id="75833at2759"/>
<dbReference type="TreeFam" id="TF315614"/>
<dbReference type="Proteomes" id="UP000009136">
    <property type="component" value="Chromosome 21"/>
</dbReference>
<dbReference type="Bgee" id="ENSBTAG00000001565">
    <property type="expression patterns" value="Expressed in uterine horn and 105 other cell types or tissues"/>
</dbReference>
<dbReference type="GO" id="GO:0005783">
    <property type="term" value="C:endoplasmic reticulum"/>
    <property type="evidence" value="ECO:0007669"/>
    <property type="project" value="UniProtKB-SubCell"/>
</dbReference>
<dbReference type="GO" id="GO:0050750">
    <property type="term" value="F:low-density lipoprotein particle receptor binding"/>
    <property type="evidence" value="ECO:0000318"/>
    <property type="project" value="GO_Central"/>
</dbReference>
<dbReference type="GO" id="GO:0006909">
    <property type="term" value="P:phagocytosis"/>
    <property type="evidence" value="ECO:0000250"/>
    <property type="project" value="UniProtKB"/>
</dbReference>
<dbReference type="GO" id="GO:0006457">
    <property type="term" value="P:protein folding"/>
    <property type="evidence" value="ECO:0000250"/>
    <property type="project" value="UniProtKB"/>
</dbReference>
<dbReference type="GO" id="GO:0034394">
    <property type="term" value="P:protein localization to cell surface"/>
    <property type="evidence" value="ECO:0000250"/>
    <property type="project" value="UniProtKB"/>
</dbReference>
<dbReference type="GO" id="GO:0016055">
    <property type="term" value="P:Wnt signaling pathway"/>
    <property type="evidence" value="ECO:0007669"/>
    <property type="project" value="UniProtKB-KW"/>
</dbReference>
<dbReference type="FunFam" id="3.30.70.260:FF:000031">
    <property type="entry name" value="LDLR chaperone MESD"/>
    <property type="match status" value="1"/>
</dbReference>
<dbReference type="Gene3D" id="3.30.70.260">
    <property type="match status" value="1"/>
</dbReference>
<dbReference type="Gene3D" id="6.10.250.640">
    <property type="match status" value="1"/>
</dbReference>
<dbReference type="InterPro" id="IPR019330">
    <property type="entry name" value="MESD"/>
</dbReference>
<dbReference type="PANTHER" id="PTHR17600:SF2">
    <property type="entry name" value="LRP CHAPERONE MESD"/>
    <property type="match status" value="1"/>
</dbReference>
<dbReference type="PANTHER" id="PTHR17600">
    <property type="entry name" value="MESODERM DEVELOPMENT CANDIDATE 2"/>
    <property type="match status" value="1"/>
</dbReference>
<dbReference type="Pfam" id="PF10185">
    <property type="entry name" value="Mesd"/>
    <property type="match status" value="1"/>
</dbReference>
<dbReference type="PROSITE" id="PS00014">
    <property type="entry name" value="ER_TARGET"/>
    <property type="match status" value="1"/>
</dbReference>
<evidence type="ECO:0000250" key="1">
    <source>
        <dbReference type="UniProtKB" id="Q9ERE7"/>
    </source>
</evidence>
<evidence type="ECO:0000255" key="2"/>
<evidence type="ECO:0000255" key="3">
    <source>
        <dbReference type="PROSITE-ProRule" id="PRU10138"/>
    </source>
</evidence>
<evidence type="ECO:0000256" key="4">
    <source>
        <dbReference type="SAM" id="MobiDB-lite"/>
    </source>
</evidence>
<evidence type="ECO:0000305" key="5"/>
<feature type="signal peptide" evidence="2">
    <location>
        <begin position="1"/>
        <end position="31"/>
    </location>
</feature>
<feature type="chain" id="PRO_0000240318" description="LRP chaperone MESD">
    <location>
        <begin position="32"/>
        <end position="232"/>
    </location>
</feature>
<feature type="region of interest" description="Chaperone domain" evidence="1">
    <location>
        <begin position="1"/>
        <end position="162"/>
    </location>
</feature>
<feature type="region of interest" description="Disordered" evidence="4">
    <location>
        <begin position="32"/>
        <end position="54"/>
    </location>
</feature>
<feature type="region of interest" description="Escort domain" evidence="1">
    <location>
        <begin position="163"/>
        <end position="202"/>
    </location>
</feature>
<feature type="region of interest" description="Disordered" evidence="4">
    <location>
        <begin position="185"/>
        <end position="232"/>
    </location>
</feature>
<feature type="short sequence motif" description="Prevents secretion from ER">
    <location>
        <begin position="229"/>
        <end position="232"/>
    </location>
</feature>
<feature type="compositionally biased region" description="Low complexity" evidence="4">
    <location>
        <begin position="32"/>
        <end position="41"/>
    </location>
</feature>
<feature type="compositionally biased region" description="Basic and acidic residues" evidence="4">
    <location>
        <begin position="194"/>
        <end position="204"/>
    </location>
</feature>
<feature type="compositionally biased region" description="Basic and acidic residues" evidence="4">
    <location>
        <begin position="211"/>
        <end position="232"/>
    </location>
</feature>
<feature type="glycosylation site" description="N-linked (GlcNAc...) asparagine" evidence="2">
    <location>
        <position position="199"/>
    </location>
</feature>
<protein>
    <recommendedName>
        <fullName evidence="5">LRP chaperone MESD</fullName>
    </recommendedName>
    <alternativeName>
        <fullName>LDLR chaperone MESD</fullName>
    </alternativeName>
    <alternativeName>
        <fullName>Mesoderm development candidate 2</fullName>
    </alternativeName>
    <alternativeName>
        <fullName>Mesoderm development protein</fullName>
    </alternativeName>
</protein>